<feature type="chain" id="PRO_1000137058" description="Glutamate N-acetyltransferase alpha chain" evidence="1">
    <location>
        <begin position="1"/>
        <end position="188"/>
    </location>
</feature>
<feature type="chain" id="PRO_1000137059" description="Glutamate N-acetyltransferase beta chain" evidence="1">
    <location>
        <begin position="189"/>
        <end position="408"/>
    </location>
</feature>
<feature type="active site" description="Nucleophile" evidence="1">
    <location>
        <position position="189"/>
    </location>
</feature>
<feature type="binding site" evidence="1">
    <location>
        <position position="150"/>
    </location>
    <ligand>
        <name>substrate</name>
    </ligand>
</feature>
<feature type="binding site" evidence="1">
    <location>
        <position position="176"/>
    </location>
    <ligand>
        <name>substrate</name>
    </ligand>
</feature>
<feature type="binding site" evidence="1">
    <location>
        <position position="189"/>
    </location>
    <ligand>
        <name>substrate</name>
    </ligand>
</feature>
<feature type="binding site" evidence="1">
    <location>
        <position position="271"/>
    </location>
    <ligand>
        <name>substrate</name>
    </ligand>
</feature>
<feature type="binding site" evidence="1">
    <location>
        <position position="403"/>
    </location>
    <ligand>
        <name>substrate</name>
    </ligand>
</feature>
<feature type="binding site" evidence="1">
    <location>
        <position position="408"/>
    </location>
    <ligand>
        <name>substrate</name>
    </ligand>
</feature>
<feature type="site" description="Involved in the stabilization of negative charge on the oxyanion by the formation of the oxyanion hole" evidence="1">
    <location>
        <position position="112"/>
    </location>
</feature>
<feature type="site" description="Involved in the stabilization of negative charge on the oxyanion by the formation of the oxyanion hole" evidence="1">
    <location>
        <position position="113"/>
    </location>
</feature>
<feature type="site" description="Cleavage; by autolysis" evidence="1">
    <location>
        <begin position="188"/>
        <end position="189"/>
    </location>
</feature>
<sequence>MAENFMVVDGGVVAPKGFKANGHKDRKYGAALIYSETDAVAAGVFTTNKVFAHPVALSKDVLVNNNVFRAIVANSGNANCFTKGGMEDAKALVKKAADLLKIPENQVLSASTGVIGRRMPMDIITIEVERAFKNMNLENSNENASKAIMTTDAFPKTVAVEFEINGKNVRIGGIAKGAGMIAPNMLHATMLGFITTDIEISKEELTDSLQKATDESFNNAVVDGDMSTNDTVYVLANAQSGVKYTDCKADFDGALAYVSKELAKMIVSDGEGAKKLIEATVHGAETKEDAKKASMSIVRSLLLKTAVFGADPNWGRIAAAVGYSGAEMDMANFDIIISDISLENQAFLVKAGEQIADCGTPELKLAEEIMKEDKIKIIVDLKMGSFENTAFGCDLGYEYVRINSEYTT</sequence>
<comment type="function">
    <text evidence="1">Catalyzes the transfer of the acetyl group from N(2)-acetylornithine to glutamate, forming N-acetylglutamate and L-ornithine.</text>
</comment>
<comment type="catalytic activity">
    <reaction evidence="1">
        <text>N(2)-acetyl-L-ornithine + L-glutamate = N-acetyl-L-glutamate + L-ornithine</text>
        <dbReference type="Rhea" id="RHEA:15349"/>
        <dbReference type="ChEBI" id="CHEBI:29985"/>
        <dbReference type="ChEBI" id="CHEBI:44337"/>
        <dbReference type="ChEBI" id="CHEBI:46911"/>
        <dbReference type="ChEBI" id="CHEBI:57805"/>
        <dbReference type="EC" id="2.3.1.35"/>
    </reaction>
</comment>
<comment type="pathway">
    <text evidence="1">Amino-acid biosynthesis; L-arginine biosynthesis; L-ornithine and N-acetyl-L-glutamate from L-glutamate and N(2)-acetyl-L-ornithine (cyclic): step 1/1.</text>
</comment>
<comment type="subunit">
    <text evidence="1">Heterotetramer of two alpha and two beta chains.</text>
</comment>
<comment type="subcellular location">
    <subcellularLocation>
        <location evidence="1">Cytoplasm</location>
    </subcellularLocation>
</comment>
<comment type="similarity">
    <text evidence="1">Belongs to the ArgJ family.</text>
</comment>
<reference key="1">
    <citation type="submission" date="2007-10" db="EMBL/GenBank/DDBJ databases">
        <title>Complete sequence of Methanococcus maripaludis C6.</title>
        <authorList>
            <consortium name="US DOE Joint Genome Institute"/>
            <person name="Copeland A."/>
            <person name="Lucas S."/>
            <person name="Lapidus A."/>
            <person name="Barry K."/>
            <person name="Glavina del Rio T."/>
            <person name="Dalin E."/>
            <person name="Tice H."/>
            <person name="Pitluck S."/>
            <person name="Clum A."/>
            <person name="Schmutz J."/>
            <person name="Larimer F."/>
            <person name="Land M."/>
            <person name="Hauser L."/>
            <person name="Kyrpides N."/>
            <person name="Mikhailova N."/>
            <person name="Sieprawska-Lupa M."/>
            <person name="Whitman W.B."/>
            <person name="Richardson P."/>
        </authorList>
    </citation>
    <scope>NUCLEOTIDE SEQUENCE [LARGE SCALE GENOMIC DNA]</scope>
    <source>
        <strain>C6 / ATCC BAA-1332</strain>
    </source>
</reference>
<gene>
    <name evidence="1" type="primary">argJ</name>
    <name type="ordered locus">MmarC6_1758</name>
</gene>
<organism>
    <name type="scientific">Methanococcus maripaludis (strain C6 / ATCC BAA-1332)</name>
    <dbReference type="NCBI Taxonomy" id="444158"/>
    <lineage>
        <taxon>Archaea</taxon>
        <taxon>Methanobacteriati</taxon>
        <taxon>Methanobacteriota</taxon>
        <taxon>Methanomada group</taxon>
        <taxon>Methanococci</taxon>
        <taxon>Methanococcales</taxon>
        <taxon>Methanococcaceae</taxon>
        <taxon>Methanococcus</taxon>
    </lineage>
</organism>
<dbReference type="EC" id="2.3.1.35" evidence="1"/>
<dbReference type="EMBL" id="CP000867">
    <property type="protein sequence ID" value="ABX02569.1"/>
    <property type="molecule type" value="Genomic_DNA"/>
</dbReference>
<dbReference type="SMR" id="A9AB46"/>
<dbReference type="STRING" id="444158.MmarC6_1758"/>
<dbReference type="MEROPS" id="T05.002"/>
<dbReference type="KEGG" id="mmx:MmarC6_1758"/>
<dbReference type="eggNOG" id="arCOG04413">
    <property type="taxonomic scope" value="Archaea"/>
</dbReference>
<dbReference type="HOGENOM" id="CLU_027172_1_0_2"/>
<dbReference type="OrthoDB" id="52592at2157"/>
<dbReference type="PhylomeDB" id="A9AB46"/>
<dbReference type="UniPathway" id="UPA00068">
    <property type="reaction ID" value="UER00111"/>
</dbReference>
<dbReference type="GO" id="GO:0005737">
    <property type="term" value="C:cytoplasm"/>
    <property type="evidence" value="ECO:0007669"/>
    <property type="project" value="UniProtKB-SubCell"/>
</dbReference>
<dbReference type="GO" id="GO:0004358">
    <property type="term" value="F:glutamate N-acetyltransferase activity"/>
    <property type="evidence" value="ECO:0007669"/>
    <property type="project" value="UniProtKB-UniRule"/>
</dbReference>
<dbReference type="GO" id="GO:0004042">
    <property type="term" value="F:L-glutamate N-acetyltransferase activity"/>
    <property type="evidence" value="ECO:0007669"/>
    <property type="project" value="UniProtKB-UniRule"/>
</dbReference>
<dbReference type="GO" id="GO:0006526">
    <property type="term" value="P:L-arginine biosynthetic process"/>
    <property type="evidence" value="ECO:0007669"/>
    <property type="project" value="UniProtKB-UniRule"/>
</dbReference>
<dbReference type="GO" id="GO:0006592">
    <property type="term" value="P:ornithine biosynthetic process"/>
    <property type="evidence" value="ECO:0007669"/>
    <property type="project" value="TreeGrafter"/>
</dbReference>
<dbReference type="CDD" id="cd02152">
    <property type="entry name" value="OAT"/>
    <property type="match status" value="1"/>
</dbReference>
<dbReference type="Gene3D" id="3.30.2330.10">
    <property type="entry name" value="arginine biosynthesis bifunctional protein suprefamily"/>
    <property type="match status" value="1"/>
</dbReference>
<dbReference type="Gene3D" id="3.10.20.340">
    <property type="entry name" value="ArgJ beta chain, C-terminal domain"/>
    <property type="match status" value="1"/>
</dbReference>
<dbReference type="Gene3D" id="3.60.70.12">
    <property type="entry name" value="L-amino peptidase D-ALA esterase/amidase"/>
    <property type="match status" value="1"/>
</dbReference>
<dbReference type="HAMAP" id="MF_01106">
    <property type="entry name" value="ArgJ"/>
    <property type="match status" value="1"/>
</dbReference>
<dbReference type="InterPro" id="IPR002813">
    <property type="entry name" value="Arg_biosynth_ArgJ"/>
</dbReference>
<dbReference type="InterPro" id="IPR016117">
    <property type="entry name" value="ArgJ-like_dom_sf"/>
</dbReference>
<dbReference type="InterPro" id="IPR042195">
    <property type="entry name" value="ArgJ_beta_C"/>
</dbReference>
<dbReference type="NCBIfam" id="TIGR00120">
    <property type="entry name" value="ArgJ"/>
    <property type="match status" value="1"/>
</dbReference>
<dbReference type="NCBIfam" id="NF003802">
    <property type="entry name" value="PRK05388.1"/>
    <property type="match status" value="1"/>
</dbReference>
<dbReference type="PANTHER" id="PTHR23100">
    <property type="entry name" value="ARGININE BIOSYNTHESIS BIFUNCTIONAL PROTEIN ARGJ"/>
    <property type="match status" value="1"/>
</dbReference>
<dbReference type="PANTHER" id="PTHR23100:SF0">
    <property type="entry name" value="ARGININE BIOSYNTHESIS BIFUNCTIONAL PROTEIN ARGJ, MITOCHONDRIAL"/>
    <property type="match status" value="1"/>
</dbReference>
<dbReference type="Pfam" id="PF01960">
    <property type="entry name" value="ArgJ"/>
    <property type="match status" value="1"/>
</dbReference>
<dbReference type="SUPFAM" id="SSF56266">
    <property type="entry name" value="DmpA/ArgJ-like"/>
    <property type="match status" value="1"/>
</dbReference>
<protein>
    <recommendedName>
        <fullName evidence="1">Glutamate N-acetyltransferase</fullName>
        <ecNumber evidence="1">2.3.1.35</ecNumber>
    </recommendedName>
    <alternativeName>
        <fullName evidence="1">Ornithine acetyltransferase</fullName>
        <shortName evidence="1">OATase</shortName>
    </alternativeName>
    <alternativeName>
        <fullName evidence="1">Ornithine transacetylase</fullName>
    </alternativeName>
    <component>
        <recommendedName>
            <fullName evidence="1">Glutamate N-acetyltransferase alpha chain</fullName>
        </recommendedName>
    </component>
    <component>
        <recommendedName>
            <fullName evidence="1">Glutamate N-acetyltransferase beta chain</fullName>
        </recommendedName>
    </component>
</protein>
<proteinExistence type="inferred from homology"/>
<name>ARGJ_METM6</name>
<keyword id="KW-0012">Acyltransferase</keyword>
<keyword id="KW-0028">Amino-acid biosynthesis</keyword>
<keyword id="KW-0055">Arginine biosynthesis</keyword>
<keyword id="KW-0068">Autocatalytic cleavage</keyword>
<keyword id="KW-0963">Cytoplasm</keyword>
<keyword id="KW-0808">Transferase</keyword>
<accession>A9AB46</accession>
<evidence type="ECO:0000255" key="1">
    <source>
        <dbReference type="HAMAP-Rule" id="MF_01106"/>
    </source>
</evidence>